<feature type="chain" id="PRO_0000419475" description="DNA helicase MCM9">
    <location>
        <begin position="1"/>
        <end position="1139"/>
    </location>
</feature>
<feature type="domain" description="MCM">
    <location>
        <begin position="299"/>
        <end position="504"/>
    </location>
</feature>
<feature type="region of interest" description="Disordered" evidence="4">
    <location>
        <begin position="671"/>
        <end position="693"/>
    </location>
</feature>
<feature type="region of interest" description="Disordered" evidence="4">
    <location>
        <begin position="707"/>
        <end position="742"/>
    </location>
</feature>
<feature type="region of interest" description="Disordered" evidence="4">
    <location>
        <begin position="776"/>
        <end position="1022"/>
    </location>
</feature>
<feature type="region of interest" description="Disordered" evidence="4">
    <location>
        <begin position="1060"/>
        <end position="1087"/>
    </location>
</feature>
<feature type="compositionally biased region" description="Low complexity" evidence="4">
    <location>
        <begin position="709"/>
        <end position="724"/>
    </location>
</feature>
<feature type="compositionally biased region" description="Basic and acidic residues" evidence="4">
    <location>
        <begin position="781"/>
        <end position="796"/>
    </location>
</feature>
<feature type="compositionally biased region" description="Basic residues" evidence="4">
    <location>
        <begin position="842"/>
        <end position="853"/>
    </location>
</feature>
<feature type="compositionally biased region" description="Pro residues" evidence="4">
    <location>
        <begin position="863"/>
        <end position="880"/>
    </location>
</feature>
<feature type="compositionally biased region" description="Polar residues" evidence="4">
    <location>
        <begin position="942"/>
        <end position="954"/>
    </location>
</feature>
<feature type="compositionally biased region" description="Basic and acidic residues" evidence="4">
    <location>
        <begin position="996"/>
        <end position="1008"/>
    </location>
</feature>
<feature type="binding site" evidence="3">
    <location>
        <begin position="351"/>
        <end position="358"/>
    </location>
    <ligand>
        <name>ATP</name>
        <dbReference type="ChEBI" id="CHEBI:30616"/>
    </ligand>
</feature>
<feature type="modified residue" description="Phosphoserine" evidence="2">
    <location>
        <position position="761"/>
    </location>
</feature>
<feature type="modified residue" description="Phosphoserine" evidence="2">
    <location>
        <position position="1105"/>
    </location>
</feature>
<gene>
    <name type="primary">MCM9</name>
</gene>
<comment type="function">
    <text evidence="1 2">Component of the MCM8-MCM9 complex, a complex involved in the repair of double-stranded DNA breaks (DBSs) and DNA interstrand cross-links (ICLs) by homologous recombination (HR). Required for DNA resection by the MRE11-RAD50-NBN/NBS1 (MRN) complex by recruiting the MRN complex to the repair site and by promoting the complex nuclease activity. Probably by regulating the localization of the MRN complex, indirectly regulates the recruitment of downstream effector RAD51 to DNA damage sites including DBSs and ICLs. Acts as a helicase in DNA mismatch repair (MMR) following DNA replication errors to unwind the mismatch containing DNA strand. In addition, recruits MLH1, a component of the MMR complex, to chromatin. The MCM8-MCM9 complex is dispensable for DNA replication and S phase progression. Probably by regulating HR, plays a key role during gametogenesis.</text>
</comment>
<comment type="catalytic activity">
    <reaction evidence="2">
        <text>ATP + H2O = ADP + phosphate + H(+)</text>
        <dbReference type="Rhea" id="RHEA:13065"/>
        <dbReference type="ChEBI" id="CHEBI:15377"/>
        <dbReference type="ChEBI" id="CHEBI:15378"/>
        <dbReference type="ChEBI" id="CHEBI:30616"/>
        <dbReference type="ChEBI" id="CHEBI:43474"/>
        <dbReference type="ChEBI" id="CHEBI:456216"/>
        <dbReference type="EC" id="3.6.4.12"/>
    </reaction>
</comment>
<comment type="subunit">
    <text evidence="2">Component of the MCM8-MCM9 complex, which forms a hexamer composed of MCM8 and MCM9. Interacts with the DNA mismatch repair (MMR) complex composed at least of MSH2, MSH3, MSH6, PMS1 and MLH1. Interacts with MLH1; the interaction recruits MLH1 to chromatin. Interacts with MSH2; the interaction recruits MCM9 to chromatin. Interacts with MSH6. Interacts with the MRN complex composed of MRE11, RAD50 and NBN/NBS1; the interaction recruits the MRN complex to DNA damage sites. Interacts with RAD51; the interaction recruits RAD51 to DNA damage sites.</text>
</comment>
<comment type="subcellular location">
    <subcellularLocation>
        <location evidence="2">Nucleus</location>
    </subcellularLocation>
    <subcellularLocation>
        <location evidence="2">Chromosome</location>
    </subcellularLocation>
    <text evidence="2">Colocalizes to nuclear foci with RPA1 following DNA damage. Localizes to double-stranded DNA breaks. Recruited to chromatin by MSH2.</text>
</comment>
<comment type="similarity">
    <text evidence="5">Belongs to the MCM family.</text>
</comment>
<reference key="1">
    <citation type="journal article" date="2009" name="Genome Biol.">
        <title>A whole-genome assembly of the domestic cow, Bos taurus.</title>
        <authorList>
            <person name="Zimin A.V."/>
            <person name="Delcher A.L."/>
            <person name="Florea L."/>
            <person name="Kelley D.R."/>
            <person name="Schatz M.C."/>
            <person name="Puiu D."/>
            <person name="Hanrahan F."/>
            <person name="Pertea G."/>
            <person name="Van Tassell C.P."/>
            <person name="Sonstegard T.S."/>
            <person name="Marcais G."/>
            <person name="Roberts M."/>
            <person name="Subramanian P."/>
            <person name="Yorke J.A."/>
            <person name="Salzberg S.L."/>
        </authorList>
    </citation>
    <scope>NUCLEOTIDE SEQUENCE [LARGE SCALE GENOMIC DNA]</scope>
    <source>
        <strain>Hereford</strain>
    </source>
</reference>
<dbReference type="EC" id="3.6.4.12"/>
<dbReference type="EMBL" id="DAAA02025730">
    <property type="status" value="NOT_ANNOTATED_CDS"/>
    <property type="molecule type" value="Genomic_DNA"/>
</dbReference>
<dbReference type="RefSeq" id="XP_001789594.4">
    <property type="nucleotide sequence ID" value="XM_001789542.5"/>
</dbReference>
<dbReference type="RefSeq" id="XP_002690126.3">
    <property type="nucleotide sequence ID" value="XM_002690080.5"/>
</dbReference>
<dbReference type="SMR" id="F1N2W9"/>
<dbReference type="FunCoup" id="F1N2W9">
    <property type="interactions" value="2682"/>
</dbReference>
<dbReference type="STRING" id="9913.ENSBTAP00000002665"/>
<dbReference type="PaxDb" id="9913-ENSBTAP00000002665"/>
<dbReference type="GeneID" id="100139498"/>
<dbReference type="KEGG" id="bta:100139498"/>
<dbReference type="CTD" id="254394"/>
<dbReference type="eggNOG" id="KOG0477">
    <property type="taxonomic scope" value="Eukaryota"/>
</dbReference>
<dbReference type="HOGENOM" id="CLU_000995_7_2_1"/>
<dbReference type="InParanoid" id="F1N2W9"/>
<dbReference type="OrthoDB" id="271325at2759"/>
<dbReference type="TreeFam" id="TF329421"/>
<dbReference type="Proteomes" id="UP000009136">
    <property type="component" value="Unplaced"/>
</dbReference>
<dbReference type="GO" id="GO:0005694">
    <property type="term" value="C:chromosome"/>
    <property type="evidence" value="ECO:0007669"/>
    <property type="project" value="UniProtKB-SubCell"/>
</dbReference>
<dbReference type="GO" id="GO:0042555">
    <property type="term" value="C:MCM complex"/>
    <property type="evidence" value="ECO:0000318"/>
    <property type="project" value="GO_Central"/>
</dbReference>
<dbReference type="GO" id="GO:0097362">
    <property type="term" value="C:MCM8-MCM9 complex"/>
    <property type="evidence" value="ECO:0000250"/>
    <property type="project" value="UniProtKB"/>
</dbReference>
<dbReference type="GO" id="GO:0005634">
    <property type="term" value="C:nucleus"/>
    <property type="evidence" value="ECO:0000318"/>
    <property type="project" value="GO_Central"/>
</dbReference>
<dbReference type="GO" id="GO:0005524">
    <property type="term" value="F:ATP binding"/>
    <property type="evidence" value="ECO:0007669"/>
    <property type="project" value="UniProtKB-KW"/>
</dbReference>
<dbReference type="GO" id="GO:0016887">
    <property type="term" value="F:ATP hydrolysis activity"/>
    <property type="evidence" value="ECO:0007669"/>
    <property type="project" value="InterPro"/>
</dbReference>
<dbReference type="GO" id="GO:0004386">
    <property type="term" value="F:helicase activity"/>
    <property type="evidence" value="ECO:0007669"/>
    <property type="project" value="UniProtKB-KW"/>
</dbReference>
<dbReference type="GO" id="GO:0003697">
    <property type="term" value="F:single-stranded DNA binding"/>
    <property type="evidence" value="ECO:0000318"/>
    <property type="project" value="GO_Central"/>
</dbReference>
<dbReference type="GO" id="GO:0006974">
    <property type="term" value="P:DNA damage response"/>
    <property type="evidence" value="ECO:0000250"/>
    <property type="project" value="UniProtKB"/>
</dbReference>
<dbReference type="GO" id="GO:0000724">
    <property type="term" value="P:double-strand break repair via homologous recombination"/>
    <property type="evidence" value="ECO:0000250"/>
    <property type="project" value="UniProtKB"/>
</dbReference>
<dbReference type="GO" id="GO:0007292">
    <property type="term" value="P:female gamete generation"/>
    <property type="evidence" value="ECO:0000250"/>
    <property type="project" value="UniProtKB"/>
</dbReference>
<dbReference type="GO" id="GO:0007276">
    <property type="term" value="P:gamete generation"/>
    <property type="evidence" value="ECO:0000250"/>
    <property type="project" value="UniProtKB"/>
</dbReference>
<dbReference type="CDD" id="cd17760">
    <property type="entry name" value="MCM9"/>
    <property type="match status" value="1"/>
</dbReference>
<dbReference type="FunFam" id="3.40.50.300:FF:000671">
    <property type="entry name" value="DNA helicase MCM9 isoform X1"/>
    <property type="match status" value="1"/>
</dbReference>
<dbReference type="FunFam" id="2.40.50.140:FF:000120">
    <property type="entry name" value="Probable DNA helicase MCM9"/>
    <property type="match status" value="1"/>
</dbReference>
<dbReference type="Gene3D" id="2.40.50.140">
    <property type="entry name" value="Nucleic acid-binding proteins"/>
    <property type="match status" value="1"/>
</dbReference>
<dbReference type="Gene3D" id="3.40.50.300">
    <property type="entry name" value="P-loop containing nucleotide triphosphate hydrolases"/>
    <property type="match status" value="1"/>
</dbReference>
<dbReference type="InterPro" id="IPR003593">
    <property type="entry name" value="AAA+_ATPase"/>
</dbReference>
<dbReference type="InterPro" id="IPR031327">
    <property type="entry name" value="MCM"/>
</dbReference>
<dbReference type="InterPro" id="IPR001208">
    <property type="entry name" value="MCM_dom"/>
</dbReference>
<dbReference type="InterPro" id="IPR041562">
    <property type="entry name" value="MCM_lid"/>
</dbReference>
<dbReference type="InterPro" id="IPR033762">
    <property type="entry name" value="MCM_OB"/>
</dbReference>
<dbReference type="InterPro" id="IPR012340">
    <property type="entry name" value="NA-bd_OB-fold"/>
</dbReference>
<dbReference type="InterPro" id="IPR027417">
    <property type="entry name" value="P-loop_NTPase"/>
</dbReference>
<dbReference type="PANTHER" id="PTHR11630:SF48">
    <property type="entry name" value="DNA HELICASE MCM9"/>
    <property type="match status" value="1"/>
</dbReference>
<dbReference type="PANTHER" id="PTHR11630">
    <property type="entry name" value="DNA REPLICATION LICENSING FACTOR MCM FAMILY MEMBER"/>
    <property type="match status" value="1"/>
</dbReference>
<dbReference type="Pfam" id="PF00493">
    <property type="entry name" value="MCM"/>
    <property type="match status" value="1"/>
</dbReference>
<dbReference type="Pfam" id="PF17855">
    <property type="entry name" value="MCM_lid"/>
    <property type="match status" value="1"/>
</dbReference>
<dbReference type="Pfam" id="PF17207">
    <property type="entry name" value="MCM_OB"/>
    <property type="match status" value="1"/>
</dbReference>
<dbReference type="PRINTS" id="PR01657">
    <property type="entry name" value="MCMFAMILY"/>
</dbReference>
<dbReference type="SMART" id="SM00382">
    <property type="entry name" value="AAA"/>
    <property type="match status" value="1"/>
</dbReference>
<dbReference type="SMART" id="SM00350">
    <property type="entry name" value="MCM"/>
    <property type="match status" value="1"/>
</dbReference>
<dbReference type="SUPFAM" id="SSF50249">
    <property type="entry name" value="Nucleic acid-binding proteins"/>
    <property type="match status" value="1"/>
</dbReference>
<dbReference type="SUPFAM" id="SSF52540">
    <property type="entry name" value="P-loop containing nucleoside triphosphate hydrolases"/>
    <property type="match status" value="1"/>
</dbReference>
<dbReference type="PROSITE" id="PS50051">
    <property type="entry name" value="MCM_2"/>
    <property type="match status" value="1"/>
</dbReference>
<organism>
    <name type="scientific">Bos taurus</name>
    <name type="common">Bovine</name>
    <dbReference type="NCBI Taxonomy" id="9913"/>
    <lineage>
        <taxon>Eukaryota</taxon>
        <taxon>Metazoa</taxon>
        <taxon>Chordata</taxon>
        <taxon>Craniata</taxon>
        <taxon>Vertebrata</taxon>
        <taxon>Euteleostomi</taxon>
        <taxon>Mammalia</taxon>
        <taxon>Eutheria</taxon>
        <taxon>Laurasiatheria</taxon>
        <taxon>Artiodactyla</taxon>
        <taxon>Ruminantia</taxon>
        <taxon>Pecora</taxon>
        <taxon>Bovidae</taxon>
        <taxon>Bovinae</taxon>
        <taxon>Bos</taxon>
    </lineage>
</organism>
<keyword id="KW-0067">ATP-binding</keyword>
<keyword id="KW-0158">Chromosome</keyword>
<keyword id="KW-0227">DNA damage</keyword>
<keyword id="KW-0234">DNA repair</keyword>
<keyword id="KW-0238">DNA-binding</keyword>
<keyword id="KW-0347">Helicase</keyword>
<keyword id="KW-0378">Hydrolase</keyword>
<keyword id="KW-0547">Nucleotide-binding</keyword>
<keyword id="KW-0539">Nucleus</keyword>
<keyword id="KW-0597">Phosphoprotein</keyword>
<keyword id="KW-1185">Reference proteome</keyword>
<proteinExistence type="inferred from homology"/>
<sequence>MNSDQVTLVGQVFESYVSEYHKNDILLILKERDEDAHYPVVVNAMTLFETNMEIGEYFNAFPNEVLTIFDNALRRSALTILQSLSQPEGLSMKQNLHARISGLPVCPELVREHIPKTKDVGHFLSVTGTVIRTSLVKILEFERDYMCNKCKHVFVVQADFEQYYTFFRPSSCPSLENCDSSKFTCLSDLSSPTRCRDYQEIKIQEQVQRLSVGSIPRSMQVILEDDLVDSCKSGDDITIYGVVMQRWKPFKQDVRCEVEIVLKANYIQVNNEESAGVNMDEEVRKEFEDFWEHYKSDPFAGRNEILASLCPQVFGMYLVKLAVAMVLAGGIQRTDATGTRVRGESHLLLVGDPGTGKSQFLKYAAKITPRSVLTTGIGSTSAGLTVTAVKDSGEWNLEAGALVLADAGLCCIDEFNSLKEHDRTSIHEAMEQQTISVAKAGLVCKLNTRTTILAATNPKGQYDPRESVSVNIALSSPLLSRFDLILVLLDTKNEDWDRIISSFILENKGYPSKSEKLWSMEKMKSYFCLIRKLQPTLSDEGNQVLLRYYQMQRQSDSRNAARTTIRLLESLIRLAEAHARLMFRDTVTLEDAVTVVSVMESSMQGGALLGGVNALHTSFPENPLQQYQTQCELILEKLELPNLLSEELRRLERLQNWSVDQSQPQAMEAETIPGSLGGDARKESNFRTSTQQEVNCSAHRFSIGGSFGGSPLLGPSSHLGPKGPASGKHSEEHRNSQDGSLDWFDSVATHPIEPKNTAPVSPSPKTSRGAMALKICNNRSQGKEDREAGQRSKLETEPLPAAGETETPLRPGNREGERPRKAATVSEAAVSADEPDSVLTHHVPRKLHKLHKARAQELCRNPTRPPLQPTSPSHPQPTPIQSPERVLETPKRKRQKSHAQAQEPHQESVESLGAPVAKLAKFTFKQKSKLTHSPEDRGPVSPGTSKPVVQSPENPQRRAKRGAALPGKGPEKLASRIRSSAQPQDETRGVSPQPPYKDRPEEKRERAPAKGTVQPELELGNDMGRFFLASERVRKEEVSCSNKSSKVHACTLAKLANFSFTSPSESKSESPPPPQSKNPSEGGPSCVATATALGRKRKTFQLDTSTEKLSLSKTSLFTLPELDDEPLDFDWDEEMRKKP</sequence>
<accession>F1N2W9</accession>
<name>MCM9_BOVIN</name>
<protein>
    <recommendedName>
        <fullName>DNA helicase MCM9</fullName>
        <ecNumber>3.6.4.12</ecNumber>
    </recommendedName>
    <alternativeName>
        <fullName>Minichromosome maintenance 9</fullName>
    </alternativeName>
</protein>
<evidence type="ECO:0000250" key="1">
    <source>
        <dbReference type="UniProtKB" id="Q2KHI9"/>
    </source>
</evidence>
<evidence type="ECO:0000250" key="2">
    <source>
        <dbReference type="UniProtKB" id="Q9NXL9"/>
    </source>
</evidence>
<evidence type="ECO:0000255" key="3"/>
<evidence type="ECO:0000256" key="4">
    <source>
        <dbReference type="SAM" id="MobiDB-lite"/>
    </source>
</evidence>
<evidence type="ECO:0000305" key="5"/>